<evidence type="ECO:0000255" key="1">
    <source>
        <dbReference type="HAMAP-Rule" id="MF_00149"/>
    </source>
</evidence>
<evidence type="ECO:0000256" key="2">
    <source>
        <dbReference type="SAM" id="MobiDB-lite"/>
    </source>
</evidence>
<name>MUTL_CHLTE</name>
<reference key="1">
    <citation type="journal article" date="2002" name="Proc. Natl. Acad. Sci. U.S.A.">
        <title>The complete genome sequence of Chlorobium tepidum TLS, a photosynthetic, anaerobic, green-sulfur bacterium.</title>
        <authorList>
            <person name="Eisen J.A."/>
            <person name="Nelson K.E."/>
            <person name="Paulsen I.T."/>
            <person name="Heidelberg J.F."/>
            <person name="Wu M."/>
            <person name="Dodson R.J."/>
            <person name="DeBoy R.T."/>
            <person name="Gwinn M.L."/>
            <person name="Nelson W.C."/>
            <person name="Haft D.H."/>
            <person name="Hickey E.K."/>
            <person name="Peterson J.D."/>
            <person name="Durkin A.S."/>
            <person name="Kolonay J.F."/>
            <person name="Yang F."/>
            <person name="Holt I.E."/>
            <person name="Umayam L.A."/>
            <person name="Mason T.M."/>
            <person name="Brenner M."/>
            <person name="Shea T.P."/>
            <person name="Parksey D.S."/>
            <person name="Nierman W.C."/>
            <person name="Feldblyum T.V."/>
            <person name="Hansen C.L."/>
            <person name="Craven M.B."/>
            <person name="Radune D."/>
            <person name="Vamathevan J.J."/>
            <person name="Khouri H.M."/>
            <person name="White O."/>
            <person name="Gruber T.M."/>
            <person name="Ketchum K.A."/>
            <person name="Venter J.C."/>
            <person name="Tettelin H."/>
            <person name="Bryant D.A."/>
            <person name="Fraser C.M."/>
        </authorList>
    </citation>
    <scope>NUCLEOTIDE SEQUENCE [LARGE SCALE GENOMIC DNA]</scope>
    <source>
        <strain>ATCC 49652 / DSM 12025 / NBRC 103806 / TLS</strain>
    </source>
</reference>
<dbReference type="EMBL" id="AE006470">
    <property type="protein sequence ID" value="AAM73245.1"/>
    <property type="molecule type" value="Genomic_DNA"/>
</dbReference>
<dbReference type="RefSeq" id="NP_662903.1">
    <property type="nucleotide sequence ID" value="NC_002932.3"/>
</dbReference>
<dbReference type="RefSeq" id="WP_010933683.1">
    <property type="nucleotide sequence ID" value="NC_002932.3"/>
</dbReference>
<dbReference type="SMR" id="Q8KAX3"/>
<dbReference type="STRING" id="194439.CT2028"/>
<dbReference type="EnsemblBacteria" id="AAM73245">
    <property type="protein sequence ID" value="AAM73245"/>
    <property type="gene ID" value="CT2028"/>
</dbReference>
<dbReference type="KEGG" id="cte:CT2028"/>
<dbReference type="PATRIC" id="fig|194439.7.peg.1837"/>
<dbReference type="eggNOG" id="COG0323">
    <property type="taxonomic scope" value="Bacteria"/>
</dbReference>
<dbReference type="HOGENOM" id="CLU_004131_4_2_10"/>
<dbReference type="OrthoDB" id="9763467at2"/>
<dbReference type="Proteomes" id="UP000001007">
    <property type="component" value="Chromosome"/>
</dbReference>
<dbReference type="GO" id="GO:0032300">
    <property type="term" value="C:mismatch repair complex"/>
    <property type="evidence" value="ECO:0007669"/>
    <property type="project" value="InterPro"/>
</dbReference>
<dbReference type="GO" id="GO:0005524">
    <property type="term" value="F:ATP binding"/>
    <property type="evidence" value="ECO:0007669"/>
    <property type="project" value="InterPro"/>
</dbReference>
<dbReference type="GO" id="GO:0016887">
    <property type="term" value="F:ATP hydrolysis activity"/>
    <property type="evidence" value="ECO:0007669"/>
    <property type="project" value="InterPro"/>
</dbReference>
<dbReference type="GO" id="GO:0140664">
    <property type="term" value="F:ATP-dependent DNA damage sensor activity"/>
    <property type="evidence" value="ECO:0007669"/>
    <property type="project" value="InterPro"/>
</dbReference>
<dbReference type="GO" id="GO:0030983">
    <property type="term" value="F:mismatched DNA binding"/>
    <property type="evidence" value="ECO:0007669"/>
    <property type="project" value="InterPro"/>
</dbReference>
<dbReference type="GO" id="GO:0006298">
    <property type="term" value="P:mismatch repair"/>
    <property type="evidence" value="ECO:0007669"/>
    <property type="project" value="UniProtKB-UniRule"/>
</dbReference>
<dbReference type="CDD" id="cd16926">
    <property type="entry name" value="HATPase_MutL-MLH-PMS-like"/>
    <property type="match status" value="1"/>
</dbReference>
<dbReference type="CDD" id="cd00782">
    <property type="entry name" value="MutL_Trans"/>
    <property type="match status" value="1"/>
</dbReference>
<dbReference type="FunFam" id="3.30.565.10:FF:000003">
    <property type="entry name" value="DNA mismatch repair endonuclease MutL"/>
    <property type="match status" value="1"/>
</dbReference>
<dbReference type="Gene3D" id="3.30.230.10">
    <property type="match status" value="1"/>
</dbReference>
<dbReference type="Gene3D" id="3.30.565.10">
    <property type="entry name" value="Histidine kinase-like ATPase, C-terminal domain"/>
    <property type="match status" value="1"/>
</dbReference>
<dbReference type="Gene3D" id="3.30.1540.20">
    <property type="entry name" value="MutL, C-terminal domain, dimerisation subdomain"/>
    <property type="match status" value="1"/>
</dbReference>
<dbReference type="Gene3D" id="3.30.1370.100">
    <property type="entry name" value="MutL, C-terminal domain, regulatory subdomain"/>
    <property type="match status" value="1"/>
</dbReference>
<dbReference type="HAMAP" id="MF_00149">
    <property type="entry name" value="DNA_mis_repair"/>
    <property type="match status" value="1"/>
</dbReference>
<dbReference type="InterPro" id="IPR014762">
    <property type="entry name" value="DNA_mismatch_repair_CS"/>
</dbReference>
<dbReference type="InterPro" id="IPR020667">
    <property type="entry name" value="DNA_mismatch_repair_MutL"/>
</dbReference>
<dbReference type="InterPro" id="IPR013507">
    <property type="entry name" value="DNA_mismatch_S5_2-like"/>
</dbReference>
<dbReference type="InterPro" id="IPR036890">
    <property type="entry name" value="HATPase_C_sf"/>
</dbReference>
<dbReference type="InterPro" id="IPR002099">
    <property type="entry name" value="MutL/Mlh/PMS"/>
</dbReference>
<dbReference type="InterPro" id="IPR038973">
    <property type="entry name" value="MutL/Mlh/Pms-like"/>
</dbReference>
<dbReference type="InterPro" id="IPR014790">
    <property type="entry name" value="MutL_C"/>
</dbReference>
<dbReference type="InterPro" id="IPR042120">
    <property type="entry name" value="MutL_C_dimsub"/>
</dbReference>
<dbReference type="InterPro" id="IPR042121">
    <property type="entry name" value="MutL_C_regsub"/>
</dbReference>
<dbReference type="InterPro" id="IPR037198">
    <property type="entry name" value="MutL_C_sf"/>
</dbReference>
<dbReference type="InterPro" id="IPR020568">
    <property type="entry name" value="Ribosomal_Su5_D2-typ_SF"/>
</dbReference>
<dbReference type="InterPro" id="IPR014721">
    <property type="entry name" value="Ribsml_uS5_D2-typ_fold_subgr"/>
</dbReference>
<dbReference type="NCBIfam" id="TIGR00585">
    <property type="entry name" value="mutl"/>
    <property type="match status" value="1"/>
</dbReference>
<dbReference type="PANTHER" id="PTHR10073">
    <property type="entry name" value="DNA MISMATCH REPAIR PROTEIN MLH, PMS, MUTL"/>
    <property type="match status" value="1"/>
</dbReference>
<dbReference type="PANTHER" id="PTHR10073:SF12">
    <property type="entry name" value="DNA MISMATCH REPAIR PROTEIN MLH1"/>
    <property type="match status" value="1"/>
</dbReference>
<dbReference type="Pfam" id="PF01119">
    <property type="entry name" value="DNA_mis_repair"/>
    <property type="match status" value="1"/>
</dbReference>
<dbReference type="Pfam" id="PF13589">
    <property type="entry name" value="HATPase_c_3"/>
    <property type="match status" value="1"/>
</dbReference>
<dbReference type="Pfam" id="PF08676">
    <property type="entry name" value="MutL_C"/>
    <property type="match status" value="1"/>
</dbReference>
<dbReference type="SMART" id="SM01340">
    <property type="entry name" value="DNA_mis_repair"/>
    <property type="match status" value="1"/>
</dbReference>
<dbReference type="SMART" id="SM00853">
    <property type="entry name" value="MutL_C"/>
    <property type="match status" value="1"/>
</dbReference>
<dbReference type="SUPFAM" id="SSF55874">
    <property type="entry name" value="ATPase domain of HSP90 chaperone/DNA topoisomerase II/histidine kinase"/>
    <property type="match status" value="1"/>
</dbReference>
<dbReference type="SUPFAM" id="SSF118116">
    <property type="entry name" value="DNA mismatch repair protein MutL"/>
    <property type="match status" value="1"/>
</dbReference>
<dbReference type="SUPFAM" id="SSF54211">
    <property type="entry name" value="Ribosomal protein S5 domain 2-like"/>
    <property type="match status" value="1"/>
</dbReference>
<dbReference type="PROSITE" id="PS00058">
    <property type="entry name" value="DNA_MISMATCH_REPAIR_1"/>
    <property type="match status" value="1"/>
</dbReference>
<feature type="chain" id="PRO_0000177938" description="DNA mismatch repair protein MutL">
    <location>
        <begin position="1"/>
        <end position="624"/>
    </location>
</feature>
<feature type="region of interest" description="Disordered" evidence="2">
    <location>
        <begin position="416"/>
        <end position="436"/>
    </location>
</feature>
<proteinExistence type="inferred from homology"/>
<sequence length="624" mass="69837">MASIARLPDIVANKISAGEVVQRPASVVKELIENSIDAGASRITVIIKDAGRQLVQIIDNGCGMESDDVLLSVERFATSKISEVDDLDALRTLGFRGEALASISSVSHFELKTRKAGNSLGTLLRSDGGVIETPQPAQCEPGTSIAVRNLFFNVPARRKFLKSNATEFKHIHETVKAFVLSYPEIEWRMMNDDEELFHFRTSDVRERLSHFYGEGFGESLIEVTEENDYMTIGGYLGKPGMMVRQKYDQYFFINRRLIQNRMLVQAVQQAYGELLEERQSPFALLFLGLDPSLVDVNVHPAKLEVRFEDEKSIRSMVYPVVKRAVRTADFSSEASFAAPSAPTVSGEVDLPEVSSRKLSYSSFSGKASTTGDLYRNYRAGAFSAPSSVSPMLFDSSLETSLSAGSRPTPMVQESLLTPSVDQPDTGDGENPVAPEKEPKIWQLHNKYIICQIKTGLMIIDQHVAHERVLYERAIDIMNEAAPNSQQLLFPQKIDLKPWQYEVFEEISDELYRLGFNIRPFGGMSVMIEGVPPDVRDGAEATILQDMIAEYQENAAKLKLEKRDNLAKSYSCRNAIMTGQKLSVEEMRMLIDRLFATRMPYVCPHGRPVIIRLSLGELDRMFGRT</sequence>
<protein>
    <recommendedName>
        <fullName evidence="1">DNA mismatch repair protein MutL</fullName>
    </recommendedName>
</protein>
<accession>Q8KAX3</accession>
<gene>
    <name evidence="1" type="primary">mutL</name>
    <name type="ordered locus">CT2028</name>
</gene>
<organism>
    <name type="scientific">Chlorobaculum tepidum (strain ATCC 49652 / DSM 12025 / NBRC 103806 / TLS)</name>
    <name type="common">Chlorobium tepidum</name>
    <dbReference type="NCBI Taxonomy" id="194439"/>
    <lineage>
        <taxon>Bacteria</taxon>
        <taxon>Pseudomonadati</taxon>
        <taxon>Chlorobiota</taxon>
        <taxon>Chlorobiia</taxon>
        <taxon>Chlorobiales</taxon>
        <taxon>Chlorobiaceae</taxon>
        <taxon>Chlorobaculum</taxon>
    </lineage>
</organism>
<keyword id="KW-0227">DNA damage</keyword>
<keyword id="KW-0234">DNA repair</keyword>
<keyword id="KW-1185">Reference proteome</keyword>
<comment type="function">
    <text evidence="1">This protein is involved in the repair of mismatches in DNA. It is required for dam-dependent methyl-directed DNA mismatch repair. May act as a 'molecular matchmaker', a protein that promotes the formation of a stable complex between two or more DNA-binding proteins in an ATP-dependent manner without itself being part of a final effector complex.</text>
</comment>
<comment type="similarity">
    <text evidence="1">Belongs to the DNA mismatch repair MutL/HexB family.</text>
</comment>